<keyword id="KW-0963">Cytoplasm</keyword>
<keyword id="KW-0269">Exonuclease</keyword>
<keyword id="KW-0378">Hydrolase</keyword>
<keyword id="KW-0540">Nuclease</keyword>
<name>EX7S_STAA9</name>
<feature type="chain" id="PRO_1000079294" description="Exodeoxyribonuclease 7 small subunit">
    <location>
        <begin position="1"/>
        <end position="76"/>
    </location>
</feature>
<reference key="1">
    <citation type="submission" date="2007-05" db="EMBL/GenBank/DDBJ databases">
        <title>Complete sequence of chromosome of Staphylococcus aureus subsp. aureus JH9.</title>
        <authorList>
            <consortium name="US DOE Joint Genome Institute"/>
            <person name="Copeland A."/>
            <person name="Lucas S."/>
            <person name="Lapidus A."/>
            <person name="Barry K."/>
            <person name="Detter J.C."/>
            <person name="Glavina del Rio T."/>
            <person name="Hammon N."/>
            <person name="Israni S."/>
            <person name="Pitluck S."/>
            <person name="Chain P."/>
            <person name="Malfatti S."/>
            <person name="Shin M."/>
            <person name="Vergez L."/>
            <person name="Schmutz J."/>
            <person name="Larimer F."/>
            <person name="Land M."/>
            <person name="Hauser L."/>
            <person name="Kyrpides N."/>
            <person name="Kim E."/>
            <person name="Tomasz A."/>
            <person name="Richardson P."/>
        </authorList>
    </citation>
    <scope>NUCLEOTIDE SEQUENCE [LARGE SCALE GENOMIC DNA]</scope>
    <source>
        <strain>JH9</strain>
    </source>
</reference>
<dbReference type="EC" id="3.1.11.6" evidence="1"/>
<dbReference type="EMBL" id="CP000703">
    <property type="protein sequence ID" value="ABQ49374.1"/>
    <property type="molecule type" value="Genomic_DNA"/>
</dbReference>
<dbReference type="RefSeq" id="WP_000159865.1">
    <property type="nucleotide sequence ID" value="NC_009487.1"/>
</dbReference>
<dbReference type="SMR" id="A5IT51"/>
<dbReference type="KEGG" id="saj:SaurJH9_1581"/>
<dbReference type="HOGENOM" id="CLU_145918_3_2_9"/>
<dbReference type="GO" id="GO:0005829">
    <property type="term" value="C:cytosol"/>
    <property type="evidence" value="ECO:0007669"/>
    <property type="project" value="TreeGrafter"/>
</dbReference>
<dbReference type="GO" id="GO:0009318">
    <property type="term" value="C:exodeoxyribonuclease VII complex"/>
    <property type="evidence" value="ECO:0007669"/>
    <property type="project" value="InterPro"/>
</dbReference>
<dbReference type="GO" id="GO:0008855">
    <property type="term" value="F:exodeoxyribonuclease VII activity"/>
    <property type="evidence" value="ECO:0007669"/>
    <property type="project" value="UniProtKB-UniRule"/>
</dbReference>
<dbReference type="GO" id="GO:0006308">
    <property type="term" value="P:DNA catabolic process"/>
    <property type="evidence" value="ECO:0007669"/>
    <property type="project" value="UniProtKB-UniRule"/>
</dbReference>
<dbReference type="FunFam" id="1.10.287.1040:FF:000006">
    <property type="entry name" value="Exodeoxyribonuclease 7 small subunit"/>
    <property type="match status" value="1"/>
</dbReference>
<dbReference type="Gene3D" id="1.10.287.1040">
    <property type="entry name" value="Exonuclease VII, small subunit"/>
    <property type="match status" value="1"/>
</dbReference>
<dbReference type="HAMAP" id="MF_00337">
    <property type="entry name" value="Exonuc_7_S"/>
    <property type="match status" value="1"/>
</dbReference>
<dbReference type="InterPro" id="IPR003761">
    <property type="entry name" value="Exonuc_VII_S"/>
</dbReference>
<dbReference type="InterPro" id="IPR037004">
    <property type="entry name" value="Exonuc_VII_ssu_sf"/>
</dbReference>
<dbReference type="NCBIfam" id="NF002140">
    <property type="entry name" value="PRK00977.1-4"/>
    <property type="match status" value="1"/>
</dbReference>
<dbReference type="NCBIfam" id="NF010671">
    <property type="entry name" value="PRK14068.1"/>
    <property type="match status" value="1"/>
</dbReference>
<dbReference type="NCBIfam" id="TIGR01280">
    <property type="entry name" value="xseB"/>
    <property type="match status" value="1"/>
</dbReference>
<dbReference type="PANTHER" id="PTHR34137">
    <property type="entry name" value="EXODEOXYRIBONUCLEASE 7 SMALL SUBUNIT"/>
    <property type="match status" value="1"/>
</dbReference>
<dbReference type="PANTHER" id="PTHR34137:SF1">
    <property type="entry name" value="EXODEOXYRIBONUCLEASE 7 SMALL SUBUNIT"/>
    <property type="match status" value="1"/>
</dbReference>
<dbReference type="Pfam" id="PF02609">
    <property type="entry name" value="Exonuc_VII_S"/>
    <property type="match status" value="1"/>
</dbReference>
<dbReference type="PIRSF" id="PIRSF006488">
    <property type="entry name" value="Exonuc_VII_S"/>
    <property type="match status" value="1"/>
</dbReference>
<dbReference type="SUPFAM" id="SSF116842">
    <property type="entry name" value="XseB-like"/>
    <property type="match status" value="1"/>
</dbReference>
<comment type="function">
    <text evidence="1">Bidirectionally degrades single-stranded DNA into large acid-insoluble oligonucleotides, which are then degraded further into small acid-soluble oligonucleotides.</text>
</comment>
<comment type="catalytic activity">
    <reaction evidence="1">
        <text>Exonucleolytic cleavage in either 5'- to 3'- or 3'- to 5'-direction to yield nucleoside 5'-phosphates.</text>
        <dbReference type="EC" id="3.1.11.6"/>
    </reaction>
</comment>
<comment type="subunit">
    <text evidence="1">Heterooligomer composed of large and small subunits.</text>
</comment>
<comment type="subcellular location">
    <subcellularLocation>
        <location evidence="1">Cytoplasm</location>
    </subcellularLocation>
</comment>
<comment type="similarity">
    <text evidence="1">Belongs to the XseB family.</text>
</comment>
<proteinExistence type="inferred from homology"/>
<organism>
    <name type="scientific">Staphylococcus aureus (strain JH9)</name>
    <dbReference type="NCBI Taxonomy" id="359786"/>
    <lineage>
        <taxon>Bacteria</taxon>
        <taxon>Bacillati</taxon>
        <taxon>Bacillota</taxon>
        <taxon>Bacilli</taxon>
        <taxon>Bacillales</taxon>
        <taxon>Staphylococcaceae</taxon>
        <taxon>Staphylococcus</taxon>
    </lineage>
</organism>
<protein>
    <recommendedName>
        <fullName evidence="1">Exodeoxyribonuclease 7 small subunit</fullName>
        <ecNumber evidence="1">3.1.11.6</ecNumber>
    </recommendedName>
    <alternativeName>
        <fullName evidence="1">Exodeoxyribonuclease VII small subunit</fullName>
        <shortName evidence="1">Exonuclease VII small subunit</shortName>
    </alternativeName>
</protein>
<accession>A5IT51</accession>
<gene>
    <name evidence="1" type="primary">xseB</name>
    <name type="ordered locus">SaurJH9_1581</name>
</gene>
<sequence length="76" mass="8760">MTKETQSFEEMMQELEQIVQKLDNETVSLEESLDLYQRGMKLSAACDTTLKNAEKKVNDLIKEEAEDVKNDESTDE</sequence>
<evidence type="ECO:0000255" key="1">
    <source>
        <dbReference type="HAMAP-Rule" id="MF_00337"/>
    </source>
</evidence>